<feature type="chain" id="PRO_0000133668" description="Probable WRKY transcription factor 26">
    <location>
        <begin position="1"/>
        <end position="309"/>
    </location>
</feature>
<feature type="DNA-binding region" description="WRKY 1" evidence="2">
    <location>
        <begin position="111"/>
        <end position="176"/>
    </location>
</feature>
<feature type="DNA-binding region" description="WRKY 2" evidence="2">
    <location>
        <begin position="228"/>
        <end position="293"/>
    </location>
</feature>
<feature type="region of interest" description="Disordered" evidence="3">
    <location>
        <begin position="1"/>
        <end position="24"/>
    </location>
</feature>
<feature type="region of interest" description="Disordered" evidence="3">
    <location>
        <begin position="167"/>
        <end position="210"/>
    </location>
</feature>
<feature type="compositionally biased region" description="Polar residues" evidence="3">
    <location>
        <begin position="175"/>
        <end position="196"/>
    </location>
</feature>
<feature type="compositionally biased region" description="Basic and acidic residues" evidence="3">
    <location>
        <begin position="197"/>
        <end position="210"/>
    </location>
</feature>
<feature type="binding site" evidence="1">
    <location>
        <position position="142"/>
    </location>
    <ligand>
        <name>Zn(2+)</name>
        <dbReference type="ChEBI" id="CHEBI:29105"/>
    </ligand>
</feature>
<feature type="binding site" evidence="1">
    <location>
        <position position="147"/>
    </location>
    <ligand>
        <name>Zn(2+)</name>
        <dbReference type="ChEBI" id="CHEBI:29105"/>
    </ligand>
</feature>
<feature type="binding site" evidence="1">
    <location>
        <position position="171"/>
    </location>
    <ligand>
        <name>Zn(2+)</name>
        <dbReference type="ChEBI" id="CHEBI:29105"/>
    </ligand>
</feature>
<feature type="binding site" evidence="1">
    <location>
        <position position="173"/>
    </location>
    <ligand>
        <name>Zn(2+)</name>
        <dbReference type="ChEBI" id="CHEBI:29105"/>
    </ligand>
</feature>
<feature type="binding site" evidence="1">
    <location>
        <position position="259"/>
    </location>
    <ligand>
        <name>Zn(2+)</name>
        <dbReference type="ChEBI" id="CHEBI:29105"/>
    </ligand>
</feature>
<feature type="binding site" evidence="1">
    <location>
        <position position="264"/>
    </location>
    <ligand>
        <name>Zn(2+)</name>
        <dbReference type="ChEBI" id="CHEBI:29105"/>
    </ligand>
</feature>
<feature type="binding site" evidence="1">
    <location>
        <position position="288"/>
    </location>
    <ligand>
        <name>Zn(2+)</name>
        <dbReference type="ChEBI" id="CHEBI:29105"/>
    </ligand>
</feature>
<feature type="binding site" evidence="1">
    <location>
        <position position="290"/>
    </location>
    <ligand>
        <name>Zn(2+)</name>
        <dbReference type="ChEBI" id="CHEBI:29105"/>
    </ligand>
</feature>
<feature type="sequence conflict" description="In Ref. 5; BAC42206." evidence="7" ref="5">
    <original>L</original>
    <variation>P</variation>
    <location>
        <position position="148"/>
    </location>
</feature>
<feature type="sequence conflict" description="In Ref. 6; AAM61254." evidence="7" ref="6">
    <original>I</original>
    <variation>F</variation>
    <location>
        <position position="165"/>
    </location>
</feature>
<feature type="sequence conflict" description="In Ref. 1; AAK28309." evidence="7" ref="1">
    <original>S</original>
    <variation>P</variation>
    <location>
        <position position="183"/>
    </location>
</feature>
<reference key="1">
    <citation type="journal article" date="2001" name="Plant Cell">
        <title>Evidence for an important role of WRKY DNA binding proteins in the regulation of NPR1 gene expression.</title>
        <authorList>
            <person name="Yu D."/>
            <person name="Chen C."/>
            <person name="Chen Z."/>
        </authorList>
    </citation>
    <scope>NUCLEOTIDE SEQUENCE [MRNA]</scope>
    <scope>INDUCTION</scope>
</reference>
<reference key="2">
    <citation type="journal article" date="1998" name="DNA Res.">
        <title>Structural analysis of Arabidopsis thaliana chromosome 5. V. Sequence features of the regions of 1,381,565 bp covered by twenty one physically assigned P1 and TAC clones.</title>
        <authorList>
            <person name="Kaneko T."/>
            <person name="Kotani H."/>
            <person name="Nakamura Y."/>
            <person name="Sato S."/>
            <person name="Asamizu E."/>
            <person name="Miyajima N."/>
            <person name="Tabata S."/>
        </authorList>
    </citation>
    <scope>NUCLEOTIDE SEQUENCE [LARGE SCALE GENOMIC DNA]</scope>
    <source>
        <strain>cv. Columbia</strain>
    </source>
</reference>
<reference key="3">
    <citation type="journal article" date="2000" name="Nature">
        <title>Sequence and analysis of chromosome 5 of the plant Arabidopsis thaliana.</title>
        <authorList>
            <person name="Tabata S."/>
            <person name="Kaneko T."/>
            <person name="Nakamura Y."/>
            <person name="Kotani H."/>
            <person name="Kato T."/>
            <person name="Asamizu E."/>
            <person name="Miyajima N."/>
            <person name="Sasamoto S."/>
            <person name="Kimura T."/>
            <person name="Hosouchi T."/>
            <person name="Kawashima K."/>
            <person name="Kohara M."/>
            <person name="Matsumoto M."/>
            <person name="Matsuno A."/>
            <person name="Muraki A."/>
            <person name="Nakayama S."/>
            <person name="Nakazaki N."/>
            <person name="Naruo K."/>
            <person name="Okumura S."/>
            <person name="Shinpo S."/>
            <person name="Takeuchi C."/>
            <person name="Wada T."/>
            <person name="Watanabe A."/>
            <person name="Yamada M."/>
            <person name="Yasuda M."/>
            <person name="Sato S."/>
            <person name="de la Bastide M."/>
            <person name="Huang E."/>
            <person name="Spiegel L."/>
            <person name="Gnoj L."/>
            <person name="O'Shaughnessy A."/>
            <person name="Preston R."/>
            <person name="Habermann K."/>
            <person name="Murray J."/>
            <person name="Johnson D."/>
            <person name="Rohlfing T."/>
            <person name="Nelson J."/>
            <person name="Stoneking T."/>
            <person name="Pepin K."/>
            <person name="Spieth J."/>
            <person name="Sekhon M."/>
            <person name="Armstrong J."/>
            <person name="Becker M."/>
            <person name="Belter E."/>
            <person name="Cordum H."/>
            <person name="Cordes M."/>
            <person name="Courtney L."/>
            <person name="Courtney W."/>
            <person name="Dante M."/>
            <person name="Du H."/>
            <person name="Edwards J."/>
            <person name="Fryman J."/>
            <person name="Haakensen B."/>
            <person name="Lamar E."/>
            <person name="Latreille P."/>
            <person name="Leonard S."/>
            <person name="Meyer R."/>
            <person name="Mulvaney E."/>
            <person name="Ozersky P."/>
            <person name="Riley A."/>
            <person name="Strowmatt C."/>
            <person name="Wagner-McPherson C."/>
            <person name="Wollam A."/>
            <person name="Yoakum M."/>
            <person name="Bell M."/>
            <person name="Dedhia N."/>
            <person name="Parnell L."/>
            <person name="Shah R."/>
            <person name="Rodriguez M."/>
            <person name="Hoon See L."/>
            <person name="Vil D."/>
            <person name="Baker J."/>
            <person name="Kirchoff K."/>
            <person name="Toth K."/>
            <person name="King L."/>
            <person name="Bahret A."/>
            <person name="Miller B."/>
            <person name="Marra M.A."/>
            <person name="Martienssen R."/>
            <person name="McCombie W.R."/>
            <person name="Wilson R.K."/>
            <person name="Murphy G."/>
            <person name="Bancroft I."/>
            <person name="Volckaert G."/>
            <person name="Wambutt R."/>
            <person name="Duesterhoeft A."/>
            <person name="Stiekema W."/>
            <person name="Pohl T."/>
            <person name="Entian K.-D."/>
            <person name="Terryn N."/>
            <person name="Hartley N."/>
            <person name="Bent E."/>
            <person name="Johnson S."/>
            <person name="Langham S.-A."/>
            <person name="McCullagh B."/>
            <person name="Robben J."/>
            <person name="Grymonprez B."/>
            <person name="Zimmermann W."/>
            <person name="Ramsperger U."/>
            <person name="Wedler H."/>
            <person name="Balke K."/>
            <person name="Wedler E."/>
            <person name="Peters S."/>
            <person name="van Staveren M."/>
            <person name="Dirkse W."/>
            <person name="Mooijman P."/>
            <person name="Klein Lankhorst R."/>
            <person name="Weitzenegger T."/>
            <person name="Bothe G."/>
            <person name="Rose M."/>
            <person name="Hauf J."/>
            <person name="Berneiser S."/>
            <person name="Hempel S."/>
            <person name="Feldpausch M."/>
            <person name="Lamberth S."/>
            <person name="Villarroel R."/>
            <person name="Gielen J."/>
            <person name="Ardiles W."/>
            <person name="Bents O."/>
            <person name="Lemcke K."/>
            <person name="Kolesov G."/>
            <person name="Mayer K.F.X."/>
            <person name="Rudd S."/>
            <person name="Schoof H."/>
            <person name="Schueller C."/>
            <person name="Zaccaria P."/>
            <person name="Mewes H.-W."/>
            <person name="Bevan M."/>
            <person name="Fransz P.F."/>
        </authorList>
    </citation>
    <scope>NUCLEOTIDE SEQUENCE [LARGE SCALE GENOMIC DNA]</scope>
    <source>
        <strain>cv. Columbia</strain>
    </source>
</reference>
<reference key="4">
    <citation type="journal article" date="2017" name="Plant J.">
        <title>Araport11: a complete reannotation of the Arabidopsis thaliana reference genome.</title>
        <authorList>
            <person name="Cheng C.Y."/>
            <person name="Krishnakumar V."/>
            <person name="Chan A.P."/>
            <person name="Thibaud-Nissen F."/>
            <person name="Schobel S."/>
            <person name="Town C.D."/>
        </authorList>
    </citation>
    <scope>GENOME REANNOTATION</scope>
    <source>
        <strain>cv. Columbia</strain>
    </source>
</reference>
<reference key="5">
    <citation type="journal article" date="2002" name="Science">
        <title>Functional annotation of a full-length Arabidopsis cDNA collection.</title>
        <authorList>
            <person name="Seki M."/>
            <person name="Narusaka M."/>
            <person name="Kamiya A."/>
            <person name="Ishida J."/>
            <person name="Satou M."/>
            <person name="Sakurai T."/>
            <person name="Nakajima M."/>
            <person name="Enju A."/>
            <person name="Akiyama K."/>
            <person name="Oono Y."/>
            <person name="Muramatsu M."/>
            <person name="Hayashizaki Y."/>
            <person name="Kawai J."/>
            <person name="Carninci P."/>
            <person name="Itoh M."/>
            <person name="Ishii Y."/>
            <person name="Arakawa T."/>
            <person name="Shibata K."/>
            <person name="Shinagawa A."/>
            <person name="Shinozaki K."/>
        </authorList>
    </citation>
    <scope>NUCLEOTIDE SEQUENCE [LARGE SCALE MRNA]</scope>
    <source>
        <strain>cv. Columbia</strain>
    </source>
</reference>
<reference key="6">
    <citation type="submission" date="2002-03" db="EMBL/GenBank/DDBJ databases">
        <title>Full-length cDNA from Arabidopsis thaliana.</title>
        <authorList>
            <person name="Brover V.V."/>
            <person name="Troukhan M.E."/>
            <person name="Alexandrov N.A."/>
            <person name="Lu Y.-P."/>
            <person name="Flavell R.B."/>
            <person name="Feldmann K.A."/>
        </authorList>
    </citation>
    <scope>NUCLEOTIDE SEQUENCE [LARGE SCALE MRNA]</scope>
</reference>
<reference key="7">
    <citation type="journal article" date="2011" name="Planta">
        <title>Arabidopsis thaliana WRKY25, WRKY26, and WRKY33 coordinate induction of plant thermotolerance.</title>
        <authorList>
            <person name="Li S."/>
            <person name="Fu Q."/>
            <person name="Chen L."/>
            <person name="Huang W."/>
            <person name="Yu D."/>
        </authorList>
    </citation>
    <scope>FUNCTION</scope>
    <scope>INDUCTION BY HEAT</scope>
</reference>
<reference key="8">
    <citation type="journal article" date="2012" name="Plant Physiol.">
        <title>Structural and functional analysis of VQ motif-containing proteins in Arabidopsis as interacting proteins of WRKY transcription factors.</title>
        <authorList>
            <person name="Cheng Y."/>
            <person name="Zhou Y."/>
            <person name="Yang Y."/>
            <person name="Chi Y.J."/>
            <person name="Zhou J."/>
            <person name="Chen J.Y."/>
            <person name="Wang F."/>
            <person name="Fan B."/>
            <person name="Shi K."/>
            <person name="Zhou Y.H."/>
            <person name="Yu J.Q."/>
            <person name="Chen Z."/>
        </authorList>
    </citation>
    <scope>INTERACTION WITH VQ10</scope>
</reference>
<proteinExistence type="evidence at protein level"/>
<name>WRK26_ARATH</name>
<accession>Q9C5T3</accession>
<accession>Q8GYK8</accession>
<accession>Q9LYQ5</accession>
<comment type="function">
    <text evidence="1 5">Transcription factor. Interacts specifically with the W box (5'-(T)TGAC[CT]-3'), a frequently occurring elicitor-responsive cis-acting element (By similarity). Functions with WRKY25 and WRKY33 as positive regulator of plant thermotolerance by partially participating in ethylene-response signal transduction pathway (PubMed:21336597).</text>
</comment>
<comment type="subunit">
    <text evidence="6">Interacts with VQ10.</text>
</comment>
<comment type="subcellular location">
    <subcellularLocation>
        <location evidence="1">Nucleus</location>
    </subcellularLocation>
</comment>
<comment type="alternative products">
    <event type="alternative splicing"/>
    <isoform>
        <id>Q9C5T3-1</id>
        <name>1</name>
        <sequence type="displayed"/>
    </isoform>
    <text>A number of isoforms are produced. According to EST sequences.</text>
</comment>
<comment type="induction">
    <text evidence="4 5">By salicylic acid (PubMed:11449049). Induced by heat stress (PubMed:21336597).</text>
</comment>
<comment type="similarity">
    <text evidence="7">Belongs to the WRKY group I family.</text>
</comment>
<protein>
    <recommendedName>
        <fullName>Probable WRKY transcription factor 26</fullName>
    </recommendedName>
    <alternativeName>
        <fullName>SPF1-like protein</fullName>
    </alternativeName>
    <alternativeName>
        <fullName>WRKY DNA-binding protein 26</fullName>
    </alternativeName>
</protein>
<organism>
    <name type="scientific">Arabidopsis thaliana</name>
    <name type="common">Mouse-ear cress</name>
    <dbReference type="NCBI Taxonomy" id="3702"/>
    <lineage>
        <taxon>Eukaryota</taxon>
        <taxon>Viridiplantae</taxon>
        <taxon>Streptophyta</taxon>
        <taxon>Embryophyta</taxon>
        <taxon>Tracheophyta</taxon>
        <taxon>Spermatophyta</taxon>
        <taxon>Magnoliopsida</taxon>
        <taxon>eudicotyledons</taxon>
        <taxon>Gunneridae</taxon>
        <taxon>Pentapetalae</taxon>
        <taxon>rosids</taxon>
        <taxon>malvids</taxon>
        <taxon>Brassicales</taxon>
        <taxon>Brassicaceae</taxon>
        <taxon>Camelineae</taxon>
        <taxon>Arabidopsis</taxon>
    </lineage>
</organism>
<sequence length="309" mass="34911">MGSFDRQRAVPKFKTATPSPLPLSPSPYFTMPPGLTPADFLDSPLLFTSSNILPSPTTGTFPAQSLNYNNNGLLIDKNEIKYEDTTPPLFLPSMVTQPLPQLDLFKSEIMSSNKTSDDGYNWRKYGQKQVKGSENPRSYFKCTYPNCLTKKKVETSLVKGQMIEIVYKGSHNHPKPQSTKRSSSTAIAAHQNSSNGDGKDIGEDETEAKRWKREENVKEPRVVVQTTSDIDILDDGYRWRKYGQKVVKGNPNPRSYYKCTFTGCFVRKHVERAFQDPKSVITTYEGKHKHQIPTPRRGPVLRLLGKTET</sequence>
<dbReference type="EMBL" id="AF224699">
    <property type="protein sequence ID" value="AAK28309.1"/>
    <property type="molecule type" value="mRNA"/>
</dbReference>
<dbReference type="EMBL" id="AB010697">
    <property type="protein sequence ID" value="BAB11168.1"/>
    <property type="molecule type" value="Genomic_DNA"/>
</dbReference>
<dbReference type="EMBL" id="AL163652">
    <property type="protein sequence ID" value="CAB87266.1"/>
    <property type="molecule type" value="Genomic_DNA"/>
</dbReference>
<dbReference type="EMBL" id="CP002688">
    <property type="protein sequence ID" value="AED91109.1"/>
    <property type="molecule type" value="Genomic_DNA"/>
</dbReference>
<dbReference type="EMBL" id="AK117545">
    <property type="protein sequence ID" value="BAC42206.1"/>
    <property type="molecule type" value="mRNA"/>
</dbReference>
<dbReference type="EMBL" id="AY084692">
    <property type="protein sequence ID" value="AAM61254.1"/>
    <property type="molecule type" value="mRNA"/>
</dbReference>
<dbReference type="PIR" id="T48481">
    <property type="entry name" value="T48481"/>
</dbReference>
<dbReference type="RefSeq" id="NP_196327.1">
    <molecule id="Q9C5T3-1"/>
    <property type="nucleotide sequence ID" value="NM_120792.2"/>
</dbReference>
<dbReference type="SMR" id="Q9C5T3"/>
<dbReference type="BioGRID" id="15880">
    <property type="interactions" value="5"/>
</dbReference>
<dbReference type="IntAct" id="Q9C5T3">
    <property type="interactions" value="4"/>
</dbReference>
<dbReference type="STRING" id="3702.Q9C5T3"/>
<dbReference type="GlyGen" id="Q9C5T3">
    <property type="glycosylation" value="1 site"/>
</dbReference>
<dbReference type="PaxDb" id="3702-AT5G07100.1"/>
<dbReference type="ProteomicsDB" id="234363">
    <molecule id="Q9C5T3-1"/>
</dbReference>
<dbReference type="EnsemblPlants" id="AT5G07100.1">
    <molecule id="Q9C5T3-1"/>
    <property type="protein sequence ID" value="AT5G07100.1"/>
    <property type="gene ID" value="AT5G07100"/>
</dbReference>
<dbReference type="GeneID" id="830601"/>
<dbReference type="Gramene" id="AT5G07100.1">
    <molecule id="Q9C5T3-1"/>
    <property type="protein sequence ID" value="AT5G07100.1"/>
    <property type="gene ID" value="AT5G07100"/>
</dbReference>
<dbReference type="KEGG" id="ath:AT5G07100"/>
<dbReference type="Araport" id="AT5G07100"/>
<dbReference type="TAIR" id="AT5G07100">
    <property type="gene designation" value="WRKY26"/>
</dbReference>
<dbReference type="eggNOG" id="ENOG502QRXJ">
    <property type="taxonomic scope" value="Eukaryota"/>
</dbReference>
<dbReference type="HOGENOM" id="CLU_012086_5_0_1"/>
<dbReference type="InParanoid" id="Q9C5T3"/>
<dbReference type="OMA" id="PSPYFTM"/>
<dbReference type="PhylomeDB" id="Q9C5T3"/>
<dbReference type="PRO" id="PR:Q9C5T3"/>
<dbReference type="Proteomes" id="UP000006548">
    <property type="component" value="Chromosome 5"/>
</dbReference>
<dbReference type="ExpressionAtlas" id="Q9C5T3">
    <property type="expression patterns" value="baseline and differential"/>
</dbReference>
<dbReference type="GO" id="GO:0005634">
    <property type="term" value="C:nucleus"/>
    <property type="evidence" value="ECO:0007669"/>
    <property type="project" value="UniProtKB-SubCell"/>
</dbReference>
<dbReference type="GO" id="GO:0003700">
    <property type="term" value="F:DNA-binding transcription factor activity"/>
    <property type="evidence" value="ECO:0000250"/>
    <property type="project" value="TAIR"/>
</dbReference>
<dbReference type="GO" id="GO:0046872">
    <property type="term" value="F:metal ion binding"/>
    <property type="evidence" value="ECO:0007669"/>
    <property type="project" value="UniProtKB-KW"/>
</dbReference>
<dbReference type="GO" id="GO:0043565">
    <property type="term" value="F:sequence-specific DNA binding"/>
    <property type="evidence" value="ECO:0007669"/>
    <property type="project" value="InterPro"/>
</dbReference>
<dbReference type="GO" id="GO:0070370">
    <property type="term" value="P:cellular heat acclimation"/>
    <property type="evidence" value="ECO:0000315"/>
    <property type="project" value="TAIR"/>
</dbReference>
<dbReference type="GO" id="GO:0034605">
    <property type="term" value="P:cellular response to heat"/>
    <property type="evidence" value="ECO:0000315"/>
    <property type="project" value="TAIR"/>
</dbReference>
<dbReference type="FunFam" id="2.20.25.80:FF:000006">
    <property type="entry name" value="WRKY transcription factor"/>
    <property type="match status" value="1"/>
</dbReference>
<dbReference type="FunFam" id="2.20.25.80:FF:000001">
    <property type="entry name" value="WRKY transcription factor 33"/>
    <property type="match status" value="1"/>
</dbReference>
<dbReference type="Gene3D" id="2.20.25.80">
    <property type="entry name" value="WRKY domain"/>
    <property type="match status" value="2"/>
</dbReference>
<dbReference type="InterPro" id="IPR003657">
    <property type="entry name" value="WRKY_dom"/>
</dbReference>
<dbReference type="InterPro" id="IPR036576">
    <property type="entry name" value="WRKY_dom_sf"/>
</dbReference>
<dbReference type="InterPro" id="IPR044810">
    <property type="entry name" value="WRKY_plant"/>
</dbReference>
<dbReference type="PANTHER" id="PTHR31221:SF367">
    <property type="entry name" value="WRKY TRANSCRIPTION FACTOR 26-RELATED"/>
    <property type="match status" value="1"/>
</dbReference>
<dbReference type="PANTHER" id="PTHR31221">
    <property type="entry name" value="WRKY TRANSCRIPTION FACTOR PROTEIN 1-RELATED"/>
    <property type="match status" value="1"/>
</dbReference>
<dbReference type="Pfam" id="PF03106">
    <property type="entry name" value="WRKY"/>
    <property type="match status" value="2"/>
</dbReference>
<dbReference type="SMART" id="SM00774">
    <property type="entry name" value="WRKY"/>
    <property type="match status" value="2"/>
</dbReference>
<dbReference type="SUPFAM" id="SSF118290">
    <property type="entry name" value="WRKY DNA-binding domain"/>
    <property type="match status" value="2"/>
</dbReference>
<dbReference type="PROSITE" id="PS50811">
    <property type="entry name" value="WRKY"/>
    <property type="match status" value="2"/>
</dbReference>
<evidence type="ECO:0000250" key="1">
    <source>
        <dbReference type="UniProtKB" id="Q9SI37"/>
    </source>
</evidence>
<evidence type="ECO:0000255" key="2">
    <source>
        <dbReference type="PROSITE-ProRule" id="PRU00223"/>
    </source>
</evidence>
<evidence type="ECO:0000256" key="3">
    <source>
        <dbReference type="SAM" id="MobiDB-lite"/>
    </source>
</evidence>
<evidence type="ECO:0000269" key="4">
    <source>
    </source>
</evidence>
<evidence type="ECO:0000269" key="5">
    <source>
    </source>
</evidence>
<evidence type="ECO:0000269" key="6">
    <source>
    </source>
</evidence>
<evidence type="ECO:0000305" key="7"/>
<keyword id="KW-0025">Alternative splicing</keyword>
<keyword id="KW-0238">DNA-binding</keyword>
<keyword id="KW-0479">Metal-binding</keyword>
<keyword id="KW-0539">Nucleus</keyword>
<keyword id="KW-1185">Reference proteome</keyword>
<keyword id="KW-0677">Repeat</keyword>
<keyword id="KW-0346">Stress response</keyword>
<keyword id="KW-0804">Transcription</keyword>
<keyword id="KW-0805">Transcription regulation</keyword>
<keyword id="KW-0862">Zinc</keyword>
<gene>
    <name type="primary">WRKY26</name>
    <name type="ordered locus">At5g07100</name>
    <name type="ORF">MOJ9.27</name>
    <name type="ORF">T28J14_40</name>
</gene>